<dbReference type="EMBL" id="J01745">
    <property type="protein sequence ID" value="AAA25406.1"/>
    <property type="molecule type" value="Genomic_DNA"/>
</dbReference>
<dbReference type="PIR" id="A03491">
    <property type="entry name" value="DZYZ1X"/>
</dbReference>
<dbReference type="RefSeq" id="WP_011555392.1">
    <property type="nucleotide sequence ID" value="NZ_JABFNQ010000113.1"/>
</dbReference>
<dbReference type="SMR" id="P02967"/>
<dbReference type="GO" id="GO:0030435">
    <property type="term" value="P:sporulation resulting in formation of a cellular spore"/>
    <property type="evidence" value="ECO:0007669"/>
    <property type="project" value="UniProtKB-KW"/>
</dbReference>
<dbReference type="Gene3D" id="2.60.20.10">
    <property type="entry name" value="Crystallins"/>
    <property type="match status" value="2"/>
</dbReference>
<dbReference type="InterPro" id="IPR001064">
    <property type="entry name" value="Beta/gamma_crystallin"/>
</dbReference>
<dbReference type="InterPro" id="IPR011024">
    <property type="entry name" value="G_crystallin-like"/>
</dbReference>
<dbReference type="Pfam" id="PF00030">
    <property type="entry name" value="Crystall"/>
    <property type="match status" value="1"/>
</dbReference>
<dbReference type="SMART" id="SM00247">
    <property type="entry name" value="XTALbg"/>
    <property type="match status" value="2"/>
</dbReference>
<dbReference type="SUPFAM" id="SSF49695">
    <property type="entry name" value="gamma-Crystallin-like"/>
    <property type="match status" value="2"/>
</dbReference>
<dbReference type="PROSITE" id="PS50915">
    <property type="entry name" value="CRYSTALLIN_BETA_GAMMA"/>
    <property type="match status" value="4"/>
</dbReference>
<sequence>MANITVFYNEDFGGKQVDLKPDEYKRDKLEALGIENNTISSVKVPPGVKAILYKNDDFTGDQIEVVANAEELGPLNNNVSSIKVMSVPVQPRARFFYKEQFDGKEVDLPPGQYTQAELERYGIDNNTISSVKPEGLKVVLFKNDNFSAGDTLSVTSNAPSLGAMNNNTSSIRITP</sequence>
<proteinExistence type="inferred from homology"/>
<keyword id="KW-0677">Repeat</keyword>
<keyword id="KW-0749">Sporulation</keyword>
<reference key="1">
    <citation type="journal article" date="1983" name="Proc. Natl. Acad. Sci. U.S.A.">
        <title>Structural similarities between the development-specific protein S from a Gram-negative bacterium, Myxococcus xanthus, and calmodulin.</title>
        <authorList>
            <person name="Inouye S."/>
            <person name="Franceschini T."/>
            <person name="Inouye M."/>
        </authorList>
    </citation>
    <scope>NUCLEOTIDE SEQUENCE [GENOMIC DNA]</scope>
    <scope>SUBCELLULAR LOCATION</scope>
</reference>
<comment type="subcellular location">
    <subcellularLocation>
        <location evidence="2">Spore</location>
        <location evidence="2">Perispore</location>
    </subcellularLocation>
    <text>Localized at the outermost layer of myxospores.</text>
</comment>
<comment type="domain">
    <text>Has a two-domain beta-structure, folded into four very similar Greek key motifs.</text>
</comment>
<comment type="similarity">
    <text evidence="3">Belongs to the beta/gamma-crystallin family.</text>
</comment>
<evidence type="ECO:0000255" key="1">
    <source>
        <dbReference type="PROSITE-ProRule" id="PRU00028"/>
    </source>
</evidence>
<evidence type="ECO:0000269" key="2">
    <source>
    </source>
</evidence>
<evidence type="ECO:0000305" key="3"/>
<accession>P02967</accession>
<organism>
    <name type="scientific">Myxococcus xanthus</name>
    <dbReference type="NCBI Taxonomy" id="34"/>
    <lineage>
        <taxon>Bacteria</taxon>
        <taxon>Pseudomonadati</taxon>
        <taxon>Myxococcota</taxon>
        <taxon>Myxococcia</taxon>
        <taxon>Myxococcales</taxon>
        <taxon>Cystobacterineae</taxon>
        <taxon>Myxococcaceae</taxon>
        <taxon>Myxococcus</taxon>
    </lineage>
</organism>
<feature type="chain" id="PRO_0000057607" description="Development-specific protein S homolog">
    <location>
        <begin position="1"/>
        <end position="175"/>
    </location>
</feature>
<feature type="domain" description="Beta/gamma crystallin 'Greek key' 1" evidence="1">
    <location>
        <begin position="2"/>
        <end position="46"/>
    </location>
</feature>
<feature type="domain" description="Beta/gamma crystallin 'Greek key' 2" evidence="1">
    <location>
        <begin position="48"/>
        <end position="86"/>
    </location>
</feature>
<feature type="domain" description="Beta/gamma crystallin 'Greek key' 3" evidence="1">
    <location>
        <begin position="91"/>
        <end position="135"/>
    </location>
</feature>
<feature type="domain" description="Beta/gamma crystallin 'Greek key' 4" evidence="1">
    <location>
        <begin position="136"/>
        <end position="175"/>
    </location>
</feature>
<feature type="region of interest" description="Connecting peptide">
    <location>
        <begin position="87"/>
        <end position="90"/>
    </location>
</feature>
<name>DEST_MYXXA</name>
<gene>
    <name type="primary">ops</name>
</gene>
<protein>
    <recommendedName>
        <fullName>Development-specific protein S homolog</fullName>
    </recommendedName>
</protein>